<reference key="1">
    <citation type="journal article" date="2003" name="Nat. Genet.">
        <title>Comparative analysis of the genome sequences of Bordetella pertussis, Bordetella parapertussis and Bordetella bronchiseptica.</title>
        <authorList>
            <person name="Parkhill J."/>
            <person name="Sebaihia M."/>
            <person name="Preston A."/>
            <person name="Murphy L.D."/>
            <person name="Thomson N.R."/>
            <person name="Harris D.E."/>
            <person name="Holden M.T.G."/>
            <person name="Churcher C.M."/>
            <person name="Bentley S.D."/>
            <person name="Mungall K.L."/>
            <person name="Cerdeno-Tarraga A.-M."/>
            <person name="Temple L."/>
            <person name="James K.D."/>
            <person name="Harris B."/>
            <person name="Quail M.A."/>
            <person name="Achtman M."/>
            <person name="Atkin R."/>
            <person name="Baker S."/>
            <person name="Basham D."/>
            <person name="Bason N."/>
            <person name="Cherevach I."/>
            <person name="Chillingworth T."/>
            <person name="Collins M."/>
            <person name="Cronin A."/>
            <person name="Davis P."/>
            <person name="Doggett J."/>
            <person name="Feltwell T."/>
            <person name="Goble A."/>
            <person name="Hamlin N."/>
            <person name="Hauser H."/>
            <person name="Holroyd S."/>
            <person name="Jagels K."/>
            <person name="Leather S."/>
            <person name="Moule S."/>
            <person name="Norberczak H."/>
            <person name="O'Neil S."/>
            <person name="Ormond D."/>
            <person name="Price C."/>
            <person name="Rabbinowitsch E."/>
            <person name="Rutter S."/>
            <person name="Sanders M."/>
            <person name="Saunders D."/>
            <person name="Seeger K."/>
            <person name="Sharp S."/>
            <person name="Simmonds M."/>
            <person name="Skelton J."/>
            <person name="Squares R."/>
            <person name="Squares S."/>
            <person name="Stevens K."/>
            <person name="Unwin L."/>
            <person name="Whitehead S."/>
            <person name="Barrell B.G."/>
            <person name="Maskell D.J."/>
        </authorList>
    </citation>
    <scope>NUCLEOTIDE SEQUENCE [LARGE SCALE GENOMIC DNA]</scope>
    <source>
        <strain>Tohama I / ATCC BAA-589 / NCTC 13251</strain>
    </source>
</reference>
<protein>
    <recommendedName>
        <fullName evidence="1">Ubiquinone biosynthesis O-methyltransferase</fullName>
    </recommendedName>
    <alternativeName>
        <fullName evidence="1">2-polyprenyl-6-hydroxyphenol methylase</fullName>
        <ecNumber evidence="1">2.1.1.222</ecNumber>
    </alternativeName>
    <alternativeName>
        <fullName evidence="1">3-demethylubiquinone 3-O-methyltransferase</fullName>
        <ecNumber evidence="1">2.1.1.64</ecNumber>
    </alternativeName>
</protein>
<feature type="chain" id="PRO_0000193370" description="Ubiquinone biosynthesis O-methyltransferase">
    <location>
        <begin position="1"/>
        <end position="241"/>
    </location>
</feature>
<feature type="binding site" evidence="1">
    <location>
        <position position="46"/>
    </location>
    <ligand>
        <name>S-adenosyl-L-methionine</name>
        <dbReference type="ChEBI" id="CHEBI:59789"/>
    </ligand>
</feature>
<feature type="binding site" evidence="1">
    <location>
        <position position="66"/>
    </location>
    <ligand>
        <name>S-adenosyl-L-methionine</name>
        <dbReference type="ChEBI" id="CHEBI:59789"/>
    </ligand>
</feature>
<feature type="binding site" evidence="1">
    <location>
        <position position="87"/>
    </location>
    <ligand>
        <name>S-adenosyl-L-methionine</name>
        <dbReference type="ChEBI" id="CHEBI:59789"/>
    </ligand>
</feature>
<feature type="binding site" evidence="1">
    <location>
        <position position="131"/>
    </location>
    <ligand>
        <name>S-adenosyl-L-methionine</name>
        <dbReference type="ChEBI" id="CHEBI:59789"/>
    </ligand>
</feature>
<sequence length="241" mass="25992">MTTATQSSAPGVNVDQAEVEKFSALAARWWDPESEFKPLHAINPLRLGWIQETAGSLSGKRVLDMGCGGGILSESMAVAGAQVTGIDLAEKSLKIARLHGLESGVKVDYRAVPVEELAAEQPGQYDVVTCMEMLEHVPDPASVVRACAALAKPGGWVFFSTLNRNPKSFLFAIVGAEYVLRLLPRGTHSYDSFIKPSELATSARQAGLEPTGMRGMEYNPITQVYSLSANTSVNYLMSTRK</sequence>
<comment type="function">
    <text evidence="1">O-methyltransferase that catalyzes the 2 O-methylation steps in the ubiquinone biosynthetic pathway.</text>
</comment>
<comment type="catalytic activity">
    <reaction evidence="1">
        <text>a 3-demethylubiquinol + S-adenosyl-L-methionine = a ubiquinol + S-adenosyl-L-homocysteine + H(+)</text>
        <dbReference type="Rhea" id="RHEA:44380"/>
        <dbReference type="Rhea" id="RHEA-COMP:9566"/>
        <dbReference type="Rhea" id="RHEA-COMP:10914"/>
        <dbReference type="ChEBI" id="CHEBI:15378"/>
        <dbReference type="ChEBI" id="CHEBI:17976"/>
        <dbReference type="ChEBI" id="CHEBI:57856"/>
        <dbReference type="ChEBI" id="CHEBI:59789"/>
        <dbReference type="ChEBI" id="CHEBI:84422"/>
        <dbReference type="EC" id="2.1.1.64"/>
    </reaction>
</comment>
<comment type="catalytic activity">
    <reaction evidence="1">
        <text>a 3-(all-trans-polyprenyl)benzene-1,2-diol + S-adenosyl-L-methionine = a 2-methoxy-6-(all-trans-polyprenyl)phenol + S-adenosyl-L-homocysteine + H(+)</text>
        <dbReference type="Rhea" id="RHEA:31411"/>
        <dbReference type="Rhea" id="RHEA-COMP:9550"/>
        <dbReference type="Rhea" id="RHEA-COMP:9551"/>
        <dbReference type="ChEBI" id="CHEBI:15378"/>
        <dbReference type="ChEBI" id="CHEBI:57856"/>
        <dbReference type="ChEBI" id="CHEBI:59789"/>
        <dbReference type="ChEBI" id="CHEBI:62729"/>
        <dbReference type="ChEBI" id="CHEBI:62731"/>
        <dbReference type="EC" id="2.1.1.222"/>
    </reaction>
</comment>
<comment type="pathway">
    <text evidence="1">Cofactor biosynthesis; ubiquinone biosynthesis.</text>
</comment>
<comment type="similarity">
    <text evidence="1">Belongs to the methyltransferase superfamily. UbiG/COQ3 family.</text>
</comment>
<keyword id="KW-0489">Methyltransferase</keyword>
<keyword id="KW-1185">Reference proteome</keyword>
<keyword id="KW-0949">S-adenosyl-L-methionine</keyword>
<keyword id="KW-0808">Transferase</keyword>
<keyword id="KW-0831">Ubiquinone biosynthesis</keyword>
<proteinExistence type="inferred from homology"/>
<evidence type="ECO:0000255" key="1">
    <source>
        <dbReference type="HAMAP-Rule" id="MF_00472"/>
    </source>
</evidence>
<dbReference type="EC" id="2.1.1.222" evidence="1"/>
<dbReference type="EC" id="2.1.1.64" evidence="1"/>
<dbReference type="EMBL" id="BX640413">
    <property type="protein sequence ID" value="CAE41244.1"/>
    <property type="molecule type" value="Genomic_DNA"/>
</dbReference>
<dbReference type="RefSeq" id="NP_879743.1">
    <property type="nucleotide sequence ID" value="NC_002929.2"/>
</dbReference>
<dbReference type="RefSeq" id="WP_010930093.1">
    <property type="nucleotide sequence ID" value="NZ_CP039022.1"/>
</dbReference>
<dbReference type="SMR" id="Q7VZG7"/>
<dbReference type="STRING" id="257313.BP0942"/>
<dbReference type="PaxDb" id="257313-BP0942"/>
<dbReference type="GeneID" id="69600868"/>
<dbReference type="KEGG" id="bpe:BP0942"/>
<dbReference type="PATRIC" id="fig|257313.5.peg.1005"/>
<dbReference type="eggNOG" id="COG2227">
    <property type="taxonomic scope" value="Bacteria"/>
</dbReference>
<dbReference type="HOGENOM" id="CLU_042432_5_0_4"/>
<dbReference type="UniPathway" id="UPA00232"/>
<dbReference type="Proteomes" id="UP000002676">
    <property type="component" value="Chromosome"/>
</dbReference>
<dbReference type="GO" id="GO:0102208">
    <property type="term" value="F:2-polyprenyl-6-hydroxyphenol methylase activity"/>
    <property type="evidence" value="ECO:0007669"/>
    <property type="project" value="UniProtKB-EC"/>
</dbReference>
<dbReference type="GO" id="GO:0061542">
    <property type="term" value="F:3-demethylubiquinol 3-O-methyltransferase activity"/>
    <property type="evidence" value="ECO:0007669"/>
    <property type="project" value="UniProtKB-UniRule"/>
</dbReference>
<dbReference type="GO" id="GO:0010420">
    <property type="term" value="F:polyprenyldihydroxybenzoate methyltransferase activity"/>
    <property type="evidence" value="ECO:0007669"/>
    <property type="project" value="InterPro"/>
</dbReference>
<dbReference type="GO" id="GO:0032259">
    <property type="term" value="P:methylation"/>
    <property type="evidence" value="ECO:0007669"/>
    <property type="project" value="UniProtKB-KW"/>
</dbReference>
<dbReference type="CDD" id="cd02440">
    <property type="entry name" value="AdoMet_MTases"/>
    <property type="match status" value="1"/>
</dbReference>
<dbReference type="FunFam" id="3.40.50.150:FF:000028">
    <property type="entry name" value="Ubiquinone biosynthesis O-methyltransferase"/>
    <property type="match status" value="1"/>
</dbReference>
<dbReference type="Gene3D" id="3.40.50.150">
    <property type="entry name" value="Vaccinia Virus protein VP39"/>
    <property type="match status" value="1"/>
</dbReference>
<dbReference type="HAMAP" id="MF_00472">
    <property type="entry name" value="UbiG"/>
    <property type="match status" value="1"/>
</dbReference>
<dbReference type="InterPro" id="IPR029063">
    <property type="entry name" value="SAM-dependent_MTases_sf"/>
</dbReference>
<dbReference type="InterPro" id="IPR010233">
    <property type="entry name" value="UbiG_MeTrfase"/>
</dbReference>
<dbReference type="NCBIfam" id="TIGR01983">
    <property type="entry name" value="UbiG"/>
    <property type="match status" value="1"/>
</dbReference>
<dbReference type="PANTHER" id="PTHR43464">
    <property type="entry name" value="METHYLTRANSFERASE"/>
    <property type="match status" value="1"/>
</dbReference>
<dbReference type="PANTHER" id="PTHR43464:SF19">
    <property type="entry name" value="UBIQUINONE BIOSYNTHESIS O-METHYLTRANSFERASE, MITOCHONDRIAL"/>
    <property type="match status" value="1"/>
</dbReference>
<dbReference type="Pfam" id="PF13489">
    <property type="entry name" value="Methyltransf_23"/>
    <property type="match status" value="1"/>
</dbReference>
<dbReference type="SUPFAM" id="SSF53335">
    <property type="entry name" value="S-adenosyl-L-methionine-dependent methyltransferases"/>
    <property type="match status" value="1"/>
</dbReference>
<gene>
    <name evidence="1" type="primary">ubiG</name>
    <name type="ordered locus">BP0942</name>
</gene>
<name>UBIG_BORPE</name>
<organism>
    <name type="scientific">Bordetella pertussis (strain Tohama I / ATCC BAA-589 / NCTC 13251)</name>
    <dbReference type="NCBI Taxonomy" id="257313"/>
    <lineage>
        <taxon>Bacteria</taxon>
        <taxon>Pseudomonadati</taxon>
        <taxon>Pseudomonadota</taxon>
        <taxon>Betaproteobacteria</taxon>
        <taxon>Burkholderiales</taxon>
        <taxon>Alcaligenaceae</taxon>
        <taxon>Bordetella</taxon>
    </lineage>
</organism>
<accession>Q7VZG7</accession>